<name>LOA1_SCHPO</name>
<evidence type="ECO:0000250" key="1"/>
<evidence type="ECO:0000255" key="2"/>
<evidence type="ECO:0000269" key="3">
    <source>
    </source>
</evidence>
<evidence type="ECO:0000305" key="4"/>
<comment type="function">
    <text evidence="1">Acyl-CoA-dependent lysophosphatidic acid acyltransferase with preference for oleoyl-CoA. Involved in triacylglyceride homeostasis and lipid droplet formation. Involved in vacuolar protein sorting (By similarity).</text>
</comment>
<comment type="catalytic activity">
    <reaction>
        <text>a 1-acyl-sn-glycero-3-phosphate + an acyl-CoA = a 1,2-diacyl-sn-glycero-3-phosphate + CoA</text>
        <dbReference type="Rhea" id="RHEA:19709"/>
        <dbReference type="ChEBI" id="CHEBI:57287"/>
        <dbReference type="ChEBI" id="CHEBI:57970"/>
        <dbReference type="ChEBI" id="CHEBI:58342"/>
        <dbReference type="ChEBI" id="CHEBI:58608"/>
        <dbReference type="EC" id="2.3.1.51"/>
    </reaction>
</comment>
<comment type="subcellular location">
    <subcellularLocation>
        <location evidence="1">Lipid droplet</location>
    </subcellularLocation>
    <subcellularLocation>
        <location evidence="3">Endoplasmic reticulum membrane</location>
        <topology evidence="3">Single-pass membrane protein</topology>
    </subcellularLocation>
    <subcellularLocation>
        <location evidence="3">Golgi apparatus membrane</location>
        <topology evidence="3">Single-pass membrane protein</topology>
    </subcellularLocation>
    <text evidence="1">Lipid droplets consist of a surface phospholipid monolayer and a hydrophobic interior. The latter makes embedding of proteins containing transmembrane segments difficult, and these may instead adopt a hairpin or monotonic conformation when associated with lipid droplet membranes (By similarity).</text>
</comment>
<comment type="similarity">
    <text evidence="4">Belongs to the 1-acyl-sn-glycerol-3-phosphate acyltransferase family.</text>
</comment>
<feature type="chain" id="PRO_0000356186" description="Putative lysophosphatidic acid:oleoyl-CoA acyltransferase">
    <location>
        <begin position="1"/>
        <end position="300"/>
    </location>
</feature>
<feature type="transmembrane region" description="Helical" evidence="2">
    <location>
        <begin position="32"/>
        <end position="52"/>
    </location>
</feature>
<feature type="short sequence motif" description="HXXXXD motif">
    <location>
        <begin position="115"/>
        <end position="120"/>
    </location>
</feature>
<dbReference type="EC" id="2.3.1.51"/>
<dbReference type="EMBL" id="CU329670">
    <property type="protein sequence ID" value="CAB66165.2"/>
    <property type="molecule type" value="Genomic_DNA"/>
</dbReference>
<dbReference type="PIR" id="T50104">
    <property type="entry name" value="T50104"/>
</dbReference>
<dbReference type="RefSeq" id="NP_593657.2">
    <property type="nucleotide sequence ID" value="NM_001019089.2"/>
</dbReference>
<dbReference type="BioGRID" id="278826">
    <property type="interactions" value="3"/>
</dbReference>
<dbReference type="FunCoup" id="Q9US27">
    <property type="interactions" value="58"/>
</dbReference>
<dbReference type="STRING" id="284812.Q9US27"/>
<dbReference type="iPTMnet" id="Q9US27"/>
<dbReference type="PaxDb" id="4896-SPAC1783.02c.1"/>
<dbReference type="EnsemblFungi" id="SPAC1783.02c.1">
    <property type="protein sequence ID" value="SPAC1783.02c.1:pep"/>
    <property type="gene ID" value="SPAC1783.02c"/>
</dbReference>
<dbReference type="GeneID" id="2542362"/>
<dbReference type="KEGG" id="spo:2542362"/>
<dbReference type="PomBase" id="SPAC1783.02c">
    <property type="gene designation" value="vps66"/>
</dbReference>
<dbReference type="VEuPathDB" id="FungiDB:SPAC1783.02c"/>
<dbReference type="eggNOG" id="KOG2898">
    <property type="taxonomic scope" value="Eukaryota"/>
</dbReference>
<dbReference type="HOGENOM" id="CLU_048121_1_0_1"/>
<dbReference type="InParanoid" id="Q9US27"/>
<dbReference type="OMA" id="EKFTRWR"/>
<dbReference type="PRO" id="PR:Q9US27"/>
<dbReference type="Proteomes" id="UP000002485">
    <property type="component" value="Chromosome I"/>
</dbReference>
<dbReference type="GO" id="GO:0005783">
    <property type="term" value="C:endoplasmic reticulum"/>
    <property type="evidence" value="ECO:0007005"/>
    <property type="project" value="PomBase"/>
</dbReference>
<dbReference type="GO" id="GO:0005789">
    <property type="term" value="C:endoplasmic reticulum membrane"/>
    <property type="evidence" value="ECO:0007669"/>
    <property type="project" value="UniProtKB-SubCell"/>
</dbReference>
<dbReference type="GO" id="GO:0005794">
    <property type="term" value="C:Golgi apparatus"/>
    <property type="evidence" value="ECO:0007005"/>
    <property type="project" value="PomBase"/>
</dbReference>
<dbReference type="GO" id="GO:0000139">
    <property type="term" value="C:Golgi membrane"/>
    <property type="evidence" value="ECO:0007669"/>
    <property type="project" value="UniProtKB-SubCell"/>
</dbReference>
<dbReference type="GO" id="GO:0005811">
    <property type="term" value="C:lipid droplet"/>
    <property type="evidence" value="ECO:0007669"/>
    <property type="project" value="UniProtKB-SubCell"/>
</dbReference>
<dbReference type="GO" id="GO:0003841">
    <property type="term" value="F:1-acylglycerol-3-phosphate O-acyltransferase activity"/>
    <property type="evidence" value="ECO:0000266"/>
    <property type="project" value="PomBase"/>
</dbReference>
<dbReference type="GO" id="GO:0019915">
    <property type="term" value="P:lipid storage"/>
    <property type="evidence" value="ECO:0000305"/>
    <property type="project" value="PomBase"/>
</dbReference>
<dbReference type="GO" id="GO:0019432">
    <property type="term" value="P:triglyceride biosynthetic process"/>
    <property type="evidence" value="ECO:0000266"/>
    <property type="project" value="PomBase"/>
</dbReference>
<dbReference type="CDD" id="cd06551">
    <property type="entry name" value="LPLAT"/>
    <property type="match status" value="1"/>
</dbReference>
<dbReference type="InterPro" id="IPR002123">
    <property type="entry name" value="Plipid/glycerol_acylTrfase"/>
</dbReference>
<dbReference type="PANTHER" id="PTHR23063:SF60">
    <property type="entry name" value="LYSOPHOSPHATIDIC ACID:OLEOYL-COA ACYLTRANSFERASE 1"/>
    <property type="match status" value="1"/>
</dbReference>
<dbReference type="PANTHER" id="PTHR23063">
    <property type="entry name" value="PHOSPHOLIPID ACYLTRANSFERASE"/>
    <property type="match status" value="1"/>
</dbReference>
<dbReference type="Pfam" id="PF01553">
    <property type="entry name" value="Acyltransferase"/>
    <property type="match status" value="1"/>
</dbReference>
<dbReference type="SMART" id="SM00563">
    <property type="entry name" value="PlsC"/>
    <property type="match status" value="1"/>
</dbReference>
<dbReference type="SUPFAM" id="SSF69593">
    <property type="entry name" value="Glycerol-3-phosphate (1)-acyltransferase"/>
    <property type="match status" value="1"/>
</dbReference>
<keyword id="KW-0012">Acyltransferase</keyword>
<keyword id="KW-0256">Endoplasmic reticulum</keyword>
<keyword id="KW-0333">Golgi apparatus</keyword>
<keyword id="KW-0551">Lipid droplet</keyword>
<keyword id="KW-0443">Lipid metabolism</keyword>
<keyword id="KW-0472">Membrane</keyword>
<keyword id="KW-1208">Phospholipid metabolism</keyword>
<keyword id="KW-1185">Reference proteome</keyword>
<keyword id="KW-0808">Transferase</keyword>
<keyword id="KW-0812">Transmembrane</keyword>
<keyword id="KW-1133">Transmembrane helix</keyword>
<protein>
    <recommendedName>
        <fullName>Putative lysophosphatidic acid:oleoyl-CoA acyltransferase</fullName>
        <shortName>LPAAT</shortName>
        <shortName>Lysophosphatidic acid acyltransferase</shortName>
        <ecNumber>2.3.1.51</ecNumber>
    </recommendedName>
    <alternativeName>
        <fullName>Vacuolar protein sorting-associated protein 66</fullName>
    </alternativeName>
</protein>
<organism>
    <name type="scientific">Schizosaccharomyces pombe (strain 972 / ATCC 24843)</name>
    <name type="common">Fission yeast</name>
    <dbReference type="NCBI Taxonomy" id="284812"/>
    <lineage>
        <taxon>Eukaryota</taxon>
        <taxon>Fungi</taxon>
        <taxon>Dikarya</taxon>
        <taxon>Ascomycota</taxon>
        <taxon>Taphrinomycotina</taxon>
        <taxon>Schizosaccharomycetes</taxon>
        <taxon>Schizosaccharomycetales</taxon>
        <taxon>Schizosaccharomycetaceae</taxon>
        <taxon>Schizosaccharomyces</taxon>
    </lineage>
</organism>
<proteinExistence type="inferred from homology"/>
<reference key="1">
    <citation type="journal article" date="2002" name="Nature">
        <title>The genome sequence of Schizosaccharomyces pombe.</title>
        <authorList>
            <person name="Wood V."/>
            <person name="Gwilliam R."/>
            <person name="Rajandream M.A."/>
            <person name="Lyne M.H."/>
            <person name="Lyne R."/>
            <person name="Stewart A."/>
            <person name="Sgouros J.G."/>
            <person name="Peat N."/>
            <person name="Hayles J."/>
            <person name="Baker S.G."/>
            <person name="Basham D."/>
            <person name="Bowman S."/>
            <person name="Brooks K."/>
            <person name="Brown D."/>
            <person name="Brown S."/>
            <person name="Chillingworth T."/>
            <person name="Churcher C.M."/>
            <person name="Collins M."/>
            <person name="Connor R."/>
            <person name="Cronin A."/>
            <person name="Davis P."/>
            <person name="Feltwell T."/>
            <person name="Fraser A."/>
            <person name="Gentles S."/>
            <person name="Goble A."/>
            <person name="Hamlin N."/>
            <person name="Harris D.E."/>
            <person name="Hidalgo J."/>
            <person name="Hodgson G."/>
            <person name="Holroyd S."/>
            <person name="Hornsby T."/>
            <person name="Howarth S."/>
            <person name="Huckle E.J."/>
            <person name="Hunt S."/>
            <person name="Jagels K."/>
            <person name="James K.D."/>
            <person name="Jones L."/>
            <person name="Jones M."/>
            <person name="Leather S."/>
            <person name="McDonald S."/>
            <person name="McLean J."/>
            <person name="Mooney P."/>
            <person name="Moule S."/>
            <person name="Mungall K.L."/>
            <person name="Murphy L.D."/>
            <person name="Niblett D."/>
            <person name="Odell C."/>
            <person name="Oliver K."/>
            <person name="O'Neil S."/>
            <person name="Pearson D."/>
            <person name="Quail M.A."/>
            <person name="Rabbinowitsch E."/>
            <person name="Rutherford K.M."/>
            <person name="Rutter S."/>
            <person name="Saunders D."/>
            <person name="Seeger K."/>
            <person name="Sharp S."/>
            <person name="Skelton J."/>
            <person name="Simmonds M.N."/>
            <person name="Squares R."/>
            <person name="Squares S."/>
            <person name="Stevens K."/>
            <person name="Taylor K."/>
            <person name="Taylor R.G."/>
            <person name="Tivey A."/>
            <person name="Walsh S.V."/>
            <person name="Warren T."/>
            <person name="Whitehead S."/>
            <person name="Woodward J.R."/>
            <person name="Volckaert G."/>
            <person name="Aert R."/>
            <person name="Robben J."/>
            <person name="Grymonprez B."/>
            <person name="Weltjens I."/>
            <person name="Vanstreels E."/>
            <person name="Rieger M."/>
            <person name="Schaefer M."/>
            <person name="Mueller-Auer S."/>
            <person name="Gabel C."/>
            <person name="Fuchs M."/>
            <person name="Duesterhoeft A."/>
            <person name="Fritzc C."/>
            <person name="Holzer E."/>
            <person name="Moestl D."/>
            <person name="Hilbert H."/>
            <person name="Borzym K."/>
            <person name="Langer I."/>
            <person name="Beck A."/>
            <person name="Lehrach H."/>
            <person name="Reinhardt R."/>
            <person name="Pohl T.M."/>
            <person name="Eger P."/>
            <person name="Zimmermann W."/>
            <person name="Wedler H."/>
            <person name="Wambutt R."/>
            <person name="Purnelle B."/>
            <person name="Goffeau A."/>
            <person name="Cadieu E."/>
            <person name="Dreano S."/>
            <person name="Gloux S."/>
            <person name="Lelaure V."/>
            <person name="Mottier S."/>
            <person name="Galibert F."/>
            <person name="Aves S.J."/>
            <person name="Xiang Z."/>
            <person name="Hunt C."/>
            <person name="Moore K."/>
            <person name="Hurst S.M."/>
            <person name="Lucas M."/>
            <person name="Rochet M."/>
            <person name="Gaillardin C."/>
            <person name="Tallada V.A."/>
            <person name="Garzon A."/>
            <person name="Thode G."/>
            <person name="Daga R.R."/>
            <person name="Cruzado L."/>
            <person name="Jimenez J."/>
            <person name="Sanchez M."/>
            <person name="del Rey F."/>
            <person name="Benito J."/>
            <person name="Dominguez A."/>
            <person name="Revuelta J.L."/>
            <person name="Moreno S."/>
            <person name="Armstrong J."/>
            <person name="Forsburg S.L."/>
            <person name="Cerutti L."/>
            <person name="Lowe T."/>
            <person name="McCombie W.R."/>
            <person name="Paulsen I."/>
            <person name="Potashkin J."/>
            <person name="Shpakovski G.V."/>
            <person name="Ussery D."/>
            <person name="Barrell B.G."/>
            <person name="Nurse P."/>
        </authorList>
    </citation>
    <scope>NUCLEOTIDE SEQUENCE [LARGE SCALE GENOMIC DNA]</scope>
    <source>
        <strain>972 / ATCC 24843</strain>
    </source>
</reference>
<reference key="2">
    <citation type="journal article" date="2011" name="Science">
        <title>Comparative functional genomics of the fission yeasts.</title>
        <authorList>
            <person name="Rhind N."/>
            <person name="Chen Z."/>
            <person name="Yassour M."/>
            <person name="Thompson D.A."/>
            <person name="Haas B.J."/>
            <person name="Habib N."/>
            <person name="Wapinski I."/>
            <person name="Roy S."/>
            <person name="Lin M.F."/>
            <person name="Heiman D.I."/>
            <person name="Young S.K."/>
            <person name="Furuya K."/>
            <person name="Guo Y."/>
            <person name="Pidoux A."/>
            <person name="Chen H.M."/>
            <person name="Robbertse B."/>
            <person name="Goldberg J.M."/>
            <person name="Aoki K."/>
            <person name="Bayne E.H."/>
            <person name="Berlin A.M."/>
            <person name="Desjardins C.A."/>
            <person name="Dobbs E."/>
            <person name="Dukaj L."/>
            <person name="Fan L."/>
            <person name="FitzGerald M.G."/>
            <person name="French C."/>
            <person name="Gujja S."/>
            <person name="Hansen K."/>
            <person name="Keifenheim D."/>
            <person name="Levin J.Z."/>
            <person name="Mosher R.A."/>
            <person name="Mueller C.A."/>
            <person name="Pfiffner J."/>
            <person name="Priest M."/>
            <person name="Russ C."/>
            <person name="Smialowska A."/>
            <person name="Swoboda P."/>
            <person name="Sykes S.M."/>
            <person name="Vaughn M."/>
            <person name="Vengrova S."/>
            <person name="Yoder R."/>
            <person name="Zeng Q."/>
            <person name="Allshire R."/>
            <person name="Baulcombe D."/>
            <person name="Birren B.W."/>
            <person name="Brown W."/>
            <person name="Ekwall K."/>
            <person name="Kellis M."/>
            <person name="Leatherwood J."/>
            <person name="Levin H."/>
            <person name="Margalit H."/>
            <person name="Martienssen R."/>
            <person name="Nieduszynski C.A."/>
            <person name="Spatafora J.W."/>
            <person name="Friedman N."/>
            <person name="Dalgaard J.Z."/>
            <person name="Baumann P."/>
            <person name="Niki H."/>
            <person name="Regev A."/>
            <person name="Nusbaum C."/>
        </authorList>
    </citation>
    <scope>REVISION OF GENE MODEL</scope>
</reference>
<reference key="3">
    <citation type="journal article" date="2006" name="Nat. Biotechnol.">
        <title>ORFeome cloning and global analysis of protein localization in the fission yeast Schizosaccharomyces pombe.</title>
        <authorList>
            <person name="Matsuyama A."/>
            <person name="Arai R."/>
            <person name="Yashiroda Y."/>
            <person name="Shirai A."/>
            <person name="Kamata A."/>
            <person name="Sekido S."/>
            <person name="Kobayashi Y."/>
            <person name="Hashimoto A."/>
            <person name="Hamamoto M."/>
            <person name="Hiraoka Y."/>
            <person name="Horinouchi S."/>
            <person name="Yoshida M."/>
        </authorList>
    </citation>
    <scope>SUBCELLULAR LOCATION [LARGE SCALE ANALYSIS]</scope>
</reference>
<accession>Q9US27</accession>
<sequence length="300" mass="33247">MEKFTRWRDPGTGIAPFHPINTETPSGFNFKWILIVVVMILRVPLCIISVTLWFLWSCFLKPILSIQPKLSFFIDSSLSRLLLLCFGCLKLSKSTSGSFVQGDSLQPGDILAVNHSSPLDVLVLSCLYNCTFAVCDSKTSNVSIISAQAYFWSCFFSPSKLKITDAKPLAKVAAKASKIGTVVILFPEGVCTNGRALCQFTPCFDSAKETDRIFPLYIKYLPPCVTLPVPSLLSFARSVLLTVSFEIRIRFSAEPLIPRNCTDVTESAQEVLSKLGRSRVVKLGKSDKLSYLDARSKKHV</sequence>
<gene>
    <name type="primary">vps66</name>
    <name type="ORF">SPAC1783.02c</name>
</gene>